<keyword id="KW-0031">Aminopeptidase</keyword>
<keyword id="KW-0378">Hydrolase</keyword>
<keyword id="KW-0479">Metal-binding</keyword>
<keyword id="KW-0645">Protease</keyword>
<keyword id="KW-1185">Reference proteome</keyword>
<name>MAP1_BUCAI</name>
<feature type="chain" id="PRO_0000148929" description="Methionine aminopeptidase">
    <location>
        <begin position="1"/>
        <end position="264"/>
    </location>
</feature>
<feature type="binding site" evidence="1">
    <location>
        <position position="79"/>
    </location>
    <ligand>
        <name>substrate</name>
    </ligand>
</feature>
<feature type="binding site" evidence="1">
    <location>
        <position position="97"/>
    </location>
    <ligand>
        <name>a divalent metal cation</name>
        <dbReference type="ChEBI" id="CHEBI:60240"/>
        <label>1</label>
    </ligand>
</feature>
<feature type="binding site" evidence="1">
    <location>
        <position position="108"/>
    </location>
    <ligand>
        <name>a divalent metal cation</name>
        <dbReference type="ChEBI" id="CHEBI:60240"/>
        <label>1</label>
    </ligand>
</feature>
<feature type="binding site" evidence="1">
    <location>
        <position position="108"/>
    </location>
    <ligand>
        <name>a divalent metal cation</name>
        <dbReference type="ChEBI" id="CHEBI:60240"/>
        <label>2</label>
        <note>catalytic</note>
    </ligand>
</feature>
<feature type="binding site" evidence="1">
    <location>
        <position position="171"/>
    </location>
    <ligand>
        <name>a divalent metal cation</name>
        <dbReference type="ChEBI" id="CHEBI:60240"/>
        <label>2</label>
        <note>catalytic</note>
    </ligand>
</feature>
<feature type="binding site" evidence="1">
    <location>
        <position position="178"/>
    </location>
    <ligand>
        <name>substrate</name>
    </ligand>
</feature>
<feature type="binding site" evidence="1">
    <location>
        <position position="204"/>
    </location>
    <ligand>
        <name>a divalent metal cation</name>
        <dbReference type="ChEBI" id="CHEBI:60240"/>
        <label>2</label>
        <note>catalytic</note>
    </ligand>
</feature>
<feature type="binding site" evidence="1">
    <location>
        <position position="235"/>
    </location>
    <ligand>
        <name>a divalent metal cation</name>
        <dbReference type="ChEBI" id="CHEBI:60240"/>
        <label>1</label>
    </ligand>
</feature>
<feature type="binding site" evidence="1">
    <location>
        <position position="235"/>
    </location>
    <ligand>
        <name>a divalent metal cation</name>
        <dbReference type="ChEBI" id="CHEBI:60240"/>
        <label>2</label>
        <note>catalytic</note>
    </ligand>
</feature>
<accession>P57324</accession>
<organism>
    <name type="scientific">Buchnera aphidicola subsp. Acyrthosiphon pisum (strain APS)</name>
    <name type="common">Acyrthosiphon pisum symbiotic bacterium</name>
    <dbReference type="NCBI Taxonomy" id="107806"/>
    <lineage>
        <taxon>Bacteria</taxon>
        <taxon>Pseudomonadati</taxon>
        <taxon>Pseudomonadota</taxon>
        <taxon>Gammaproteobacteria</taxon>
        <taxon>Enterobacterales</taxon>
        <taxon>Erwiniaceae</taxon>
        <taxon>Buchnera</taxon>
    </lineage>
</organism>
<reference key="1">
    <citation type="journal article" date="2000" name="Nature">
        <title>Genome sequence of the endocellular bacterial symbiont of aphids Buchnera sp. APS.</title>
        <authorList>
            <person name="Shigenobu S."/>
            <person name="Watanabe H."/>
            <person name="Hattori M."/>
            <person name="Sakaki Y."/>
            <person name="Ishikawa H."/>
        </authorList>
    </citation>
    <scope>NUCLEOTIDE SEQUENCE [LARGE SCALE GENOMIC DNA]</scope>
    <source>
        <strain>APS</strain>
    </source>
</reference>
<dbReference type="EC" id="3.4.11.18" evidence="1"/>
<dbReference type="EMBL" id="BA000003">
    <property type="protein sequence ID" value="BAB12945.1"/>
    <property type="molecule type" value="Genomic_DNA"/>
</dbReference>
<dbReference type="RefSeq" id="NP_240059.1">
    <property type="nucleotide sequence ID" value="NC_002528.1"/>
</dbReference>
<dbReference type="RefSeq" id="WP_009874186.1">
    <property type="nucleotide sequence ID" value="NZ_AP036055.1"/>
</dbReference>
<dbReference type="SMR" id="P57324"/>
<dbReference type="STRING" id="563178.BUAP5A_225"/>
<dbReference type="MEROPS" id="M24.001"/>
<dbReference type="EnsemblBacteria" id="BAB12945">
    <property type="protein sequence ID" value="BAB12945"/>
    <property type="gene ID" value="BAB12945"/>
</dbReference>
<dbReference type="KEGG" id="buc:BU230"/>
<dbReference type="PATRIC" id="fig|107806.10.peg.243"/>
<dbReference type="eggNOG" id="COG0024">
    <property type="taxonomic scope" value="Bacteria"/>
</dbReference>
<dbReference type="HOGENOM" id="CLU_015857_0_0_6"/>
<dbReference type="Proteomes" id="UP000001806">
    <property type="component" value="Chromosome"/>
</dbReference>
<dbReference type="GO" id="GO:0005829">
    <property type="term" value="C:cytosol"/>
    <property type="evidence" value="ECO:0007669"/>
    <property type="project" value="TreeGrafter"/>
</dbReference>
<dbReference type="GO" id="GO:0004239">
    <property type="term" value="F:initiator methionyl aminopeptidase activity"/>
    <property type="evidence" value="ECO:0007669"/>
    <property type="project" value="UniProtKB-UniRule"/>
</dbReference>
<dbReference type="GO" id="GO:0046872">
    <property type="term" value="F:metal ion binding"/>
    <property type="evidence" value="ECO:0007669"/>
    <property type="project" value="UniProtKB-UniRule"/>
</dbReference>
<dbReference type="GO" id="GO:0070006">
    <property type="term" value="F:metalloaminopeptidase activity"/>
    <property type="evidence" value="ECO:0007669"/>
    <property type="project" value="UniProtKB-UniRule"/>
</dbReference>
<dbReference type="GO" id="GO:0006508">
    <property type="term" value="P:proteolysis"/>
    <property type="evidence" value="ECO:0007669"/>
    <property type="project" value="UniProtKB-KW"/>
</dbReference>
<dbReference type="CDD" id="cd01086">
    <property type="entry name" value="MetAP1"/>
    <property type="match status" value="1"/>
</dbReference>
<dbReference type="Gene3D" id="3.90.230.10">
    <property type="entry name" value="Creatinase/methionine aminopeptidase superfamily"/>
    <property type="match status" value="1"/>
</dbReference>
<dbReference type="HAMAP" id="MF_01974">
    <property type="entry name" value="MetAP_1"/>
    <property type="match status" value="1"/>
</dbReference>
<dbReference type="InterPro" id="IPR036005">
    <property type="entry name" value="Creatinase/aminopeptidase-like"/>
</dbReference>
<dbReference type="InterPro" id="IPR000994">
    <property type="entry name" value="Pept_M24"/>
</dbReference>
<dbReference type="InterPro" id="IPR001714">
    <property type="entry name" value="Pept_M24_MAP"/>
</dbReference>
<dbReference type="InterPro" id="IPR002467">
    <property type="entry name" value="Pept_M24A_MAP1"/>
</dbReference>
<dbReference type="NCBIfam" id="TIGR00500">
    <property type="entry name" value="met_pdase_I"/>
    <property type="match status" value="1"/>
</dbReference>
<dbReference type="PANTHER" id="PTHR43330">
    <property type="entry name" value="METHIONINE AMINOPEPTIDASE"/>
    <property type="match status" value="1"/>
</dbReference>
<dbReference type="PANTHER" id="PTHR43330:SF27">
    <property type="entry name" value="METHIONINE AMINOPEPTIDASE"/>
    <property type="match status" value="1"/>
</dbReference>
<dbReference type="Pfam" id="PF00557">
    <property type="entry name" value="Peptidase_M24"/>
    <property type="match status" value="1"/>
</dbReference>
<dbReference type="PRINTS" id="PR00599">
    <property type="entry name" value="MAPEPTIDASE"/>
</dbReference>
<dbReference type="SUPFAM" id="SSF55920">
    <property type="entry name" value="Creatinase/aminopeptidase"/>
    <property type="match status" value="1"/>
</dbReference>
<dbReference type="PROSITE" id="PS00680">
    <property type="entry name" value="MAP_1"/>
    <property type="match status" value="1"/>
</dbReference>
<protein>
    <recommendedName>
        <fullName evidence="1">Methionine aminopeptidase</fullName>
        <shortName evidence="1">MAP</shortName>
        <shortName evidence="1">MetAP</shortName>
        <ecNumber evidence="1">3.4.11.18</ecNumber>
    </recommendedName>
    <alternativeName>
        <fullName evidence="1">Peptidase M</fullName>
    </alternativeName>
</protein>
<evidence type="ECO:0000255" key="1">
    <source>
        <dbReference type="HAMAP-Rule" id="MF_01974"/>
    </source>
</evidence>
<comment type="function">
    <text evidence="1">Removes the N-terminal methionine from nascent proteins. The N-terminal methionine is often cleaved when the second residue in the primary sequence is small and uncharged (Met-Ala-, Cys, Gly, Pro, Ser, Thr, or Val). Requires deformylation of the N(alpha)-formylated initiator methionine before it can be hydrolyzed.</text>
</comment>
<comment type="catalytic activity">
    <reaction evidence="1">
        <text>Release of N-terminal amino acids, preferentially methionine, from peptides and arylamides.</text>
        <dbReference type="EC" id="3.4.11.18"/>
    </reaction>
</comment>
<comment type="cofactor">
    <cofactor evidence="1">
        <name>Co(2+)</name>
        <dbReference type="ChEBI" id="CHEBI:48828"/>
    </cofactor>
    <cofactor evidence="1">
        <name>Zn(2+)</name>
        <dbReference type="ChEBI" id="CHEBI:29105"/>
    </cofactor>
    <cofactor evidence="1">
        <name>Mn(2+)</name>
        <dbReference type="ChEBI" id="CHEBI:29035"/>
    </cofactor>
    <cofactor evidence="1">
        <name>Fe(2+)</name>
        <dbReference type="ChEBI" id="CHEBI:29033"/>
    </cofactor>
    <text evidence="1">Binds 2 divalent metal cations per subunit. Has a high-affinity and a low affinity metal-binding site. The true nature of the physiological cofactor is under debate. The enzyme is active with cobalt, zinc, manganese or divalent iron ions. Most likely, methionine aminopeptidases function as mononuclear Fe(2+)-metalloproteases under physiological conditions, and the catalytically relevant metal-binding site has been assigned to the histidine-containing high-affinity site.</text>
</comment>
<comment type="subunit">
    <text evidence="1">Monomer.</text>
</comment>
<comment type="similarity">
    <text evidence="1">Belongs to the peptidase M24A family. Methionine aminopeptidase type 1 subfamily.</text>
</comment>
<gene>
    <name evidence="1" type="primary">map</name>
    <name type="ordered locus">BU230</name>
</gene>
<sequence>MSCIIKTESEIKKMRISGKLAAEVLEMIKEHLQPKISTEDINQICHDYIVYKKKAISACLGYHGFPKSICISINDVVCHGIPSKNQVFKEGDIVNIDIAIIKDGYHGDTSKMFYIGKTSILSKRLCQVARESLYLSLKLVKPGIPLYKIGEIIQNYVESNNFSVVKEYCGHGIGRNFHEEPHVLHYKNKKNNIILKKGMIFTIEPMINSGNPEVKCMKDGWTVKTKDRSLSAQYEHTVLVTEYGCDILTWQKDEDISQKLVNIN</sequence>
<proteinExistence type="inferred from homology"/>